<proteinExistence type="evidence at protein level"/>
<organism>
    <name type="scientific">Pseudomonas aeruginosa (strain ATCC 15692 / DSM 22644 / CIP 104116 / JCM 14847 / LMG 12228 / 1C / PRS 101 / PAO1)</name>
    <dbReference type="NCBI Taxonomy" id="208964"/>
    <lineage>
        <taxon>Bacteria</taxon>
        <taxon>Pseudomonadati</taxon>
        <taxon>Pseudomonadota</taxon>
        <taxon>Gammaproteobacteria</taxon>
        <taxon>Pseudomonadales</taxon>
        <taxon>Pseudomonadaceae</taxon>
        <taxon>Pseudomonas</taxon>
    </lineage>
</organism>
<accession>Q9RQ16</accession>
<feature type="chain" id="PRO_0000214336" description="UPF0301 protein AlgH">
    <location>
        <begin position="1"/>
        <end position="189"/>
    </location>
</feature>
<feature type="strand" evidence="3">
    <location>
        <begin position="6"/>
        <end position="8"/>
    </location>
</feature>
<feature type="strand" evidence="3">
    <location>
        <begin position="12"/>
        <end position="16"/>
    </location>
</feature>
<feature type="strand" evidence="3">
    <location>
        <begin position="23"/>
        <end position="25"/>
    </location>
</feature>
<feature type="strand" evidence="3">
    <location>
        <begin position="29"/>
        <end position="36"/>
    </location>
</feature>
<feature type="strand" evidence="3">
    <location>
        <begin position="39"/>
        <end position="44"/>
    </location>
</feature>
<feature type="strand" evidence="3">
    <location>
        <begin position="48"/>
        <end position="52"/>
    </location>
</feature>
<feature type="helix" evidence="3">
    <location>
        <begin position="53"/>
        <end position="60"/>
    </location>
</feature>
<feature type="helix" evidence="3">
    <location>
        <begin position="68"/>
        <end position="71"/>
    </location>
</feature>
<feature type="strand" evidence="3">
    <location>
        <begin position="74"/>
        <end position="77"/>
    </location>
</feature>
<feature type="strand" evidence="3">
    <location>
        <begin position="80"/>
        <end position="92"/>
    </location>
</feature>
<feature type="strand" evidence="3">
    <location>
        <begin position="99"/>
        <end position="102"/>
    </location>
</feature>
<feature type="strand" evidence="3">
    <location>
        <begin position="105"/>
        <end position="108"/>
    </location>
</feature>
<feature type="helix" evidence="3">
    <location>
        <begin position="111"/>
        <end position="119"/>
    </location>
</feature>
<feature type="strand" evidence="3">
    <location>
        <begin position="127"/>
        <end position="136"/>
    </location>
</feature>
<feature type="helix" evidence="3">
    <location>
        <begin position="139"/>
        <end position="145"/>
    </location>
</feature>
<feature type="strand" evidence="3">
    <location>
        <begin position="148"/>
        <end position="153"/>
    </location>
</feature>
<feature type="helix" evidence="3">
    <location>
        <begin position="156"/>
        <end position="160"/>
    </location>
</feature>
<feature type="helix" evidence="3">
    <location>
        <begin position="166"/>
        <end position="175"/>
    </location>
</feature>
<feature type="helix" evidence="3">
    <location>
        <begin position="179"/>
        <end position="183"/>
    </location>
</feature>
<protein>
    <recommendedName>
        <fullName evidence="1">UPF0301 protein AlgH</fullName>
    </recommendedName>
</protein>
<keyword id="KW-0002">3D-structure</keyword>
<keyword id="KW-1185">Reference proteome</keyword>
<evidence type="ECO:0000255" key="1">
    <source>
        <dbReference type="HAMAP-Rule" id="MF_00758"/>
    </source>
</evidence>
<evidence type="ECO:0000305" key="2"/>
<evidence type="ECO:0007829" key="3">
    <source>
        <dbReference type="PDB" id="2MUI"/>
    </source>
</evidence>
<sequence>MKQSSPTYLKHHFLIAMPHMADPNFAQTVTYLVEHNEQGAMGLVINRPSGLNLAEVLEQLKPDALPPARCQHIDIYNGGPVQTDRGFVLHPSGLSYQSTLELGELAMSTSQDVLFAIAAGTGPEKSLISLGYAGWEAGQLEAELSDNAWLTCPADPAILFDLPPEERLSAAAARLGVNLSLLTAQAGHA</sequence>
<reference key="1">
    <citation type="submission" date="1999-03" db="EMBL/GenBank/DDBJ databases">
        <title>Global regulation in Pseudomonas aeruginosa: alginate transcriptional activators AlgR2 and AlgH act as repressors of quorum sensing.</title>
        <authorList>
            <person name="Ledgham F."/>
            <person name="Latifi A."/>
            <person name="Schlictman D."/>
            <person name="Soscia C."/>
            <person name="Chakrabarty A.M."/>
            <person name="Lazdunski A."/>
            <person name="Foglino M."/>
        </authorList>
    </citation>
    <scope>NUCLEOTIDE SEQUENCE [GENOMIC DNA]</scope>
    <source>
        <strain>8830</strain>
    </source>
</reference>
<reference key="2">
    <citation type="journal article" date="2000" name="Nature">
        <title>Complete genome sequence of Pseudomonas aeruginosa PAO1, an opportunistic pathogen.</title>
        <authorList>
            <person name="Stover C.K."/>
            <person name="Pham X.-Q.T."/>
            <person name="Erwin A.L."/>
            <person name="Mizoguchi S.D."/>
            <person name="Warrener P."/>
            <person name="Hickey M.J."/>
            <person name="Brinkman F.S.L."/>
            <person name="Hufnagle W.O."/>
            <person name="Kowalik D.J."/>
            <person name="Lagrou M."/>
            <person name="Garber R.L."/>
            <person name="Goltry L."/>
            <person name="Tolentino E."/>
            <person name="Westbrock-Wadman S."/>
            <person name="Yuan Y."/>
            <person name="Brody L.L."/>
            <person name="Coulter S.N."/>
            <person name="Folger K.R."/>
            <person name="Kas A."/>
            <person name="Larbig K."/>
            <person name="Lim R.M."/>
            <person name="Smith K.A."/>
            <person name="Spencer D.H."/>
            <person name="Wong G.K.-S."/>
            <person name="Wu Z."/>
            <person name="Paulsen I.T."/>
            <person name="Reizer J."/>
            <person name="Saier M.H. Jr."/>
            <person name="Hancock R.E.W."/>
            <person name="Lory S."/>
            <person name="Olson M.V."/>
        </authorList>
    </citation>
    <scope>NUCLEOTIDE SEQUENCE [LARGE SCALE GENOMIC DNA]</scope>
    <source>
        <strain>ATCC 15692 / DSM 22644 / CIP 104116 / JCM 14847 / LMG 12228 / 1C / PRS 101 / PAO1</strain>
    </source>
</reference>
<name>ALGH_PSEAE</name>
<gene>
    <name type="primary">algH</name>
    <name type="ordered locus">PA0405</name>
</gene>
<comment type="similarity">
    <text evidence="1">Belongs to the UPF0301 (AlgH) family.</text>
</comment>
<comment type="caution">
    <text evidence="2">Is indicated by Ref.1 as being involved in the transcriptional regulation of alginate biosynthesis. However, there is no evidence for such function in proteins belonging to this family.</text>
</comment>
<dbReference type="EMBL" id="AF137022">
    <property type="protein sequence ID" value="AAD52846.1"/>
    <property type="molecule type" value="Genomic_DNA"/>
</dbReference>
<dbReference type="EMBL" id="AE004091">
    <property type="protein sequence ID" value="AAG03794.1"/>
    <property type="molecule type" value="Genomic_DNA"/>
</dbReference>
<dbReference type="PIR" id="C83596">
    <property type="entry name" value="C83596"/>
</dbReference>
<dbReference type="RefSeq" id="NP_249096.1">
    <property type="nucleotide sequence ID" value="NC_002516.2"/>
</dbReference>
<dbReference type="RefSeq" id="WP_003100947.1">
    <property type="nucleotide sequence ID" value="NZ_QZGE01000016.1"/>
</dbReference>
<dbReference type="PDB" id="2MUI">
    <property type="method" value="NMR"/>
    <property type="chains" value="A=1-189"/>
</dbReference>
<dbReference type="PDBsum" id="2MUI"/>
<dbReference type="BMRB" id="Q9RQ16"/>
<dbReference type="SMR" id="Q9RQ16"/>
<dbReference type="FunCoup" id="Q9RQ16">
    <property type="interactions" value="327"/>
</dbReference>
<dbReference type="STRING" id="208964.PA0405"/>
<dbReference type="PaxDb" id="208964-PA0405"/>
<dbReference type="DNASU" id="878243"/>
<dbReference type="GeneID" id="878243"/>
<dbReference type="KEGG" id="pae:PA0405"/>
<dbReference type="PATRIC" id="fig|208964.12.peg.426"/>
<dbReference type="PseudoCAP" id="PA0405"/>
<dbReference type="HOGENOM" id="CLU_057596_1_0_6"/>
<dbReference type="InParanoid" id="Q9RQ16"/>
<dbReference type="OrthoDB" id="9807486at2"/>
<dbReference type="PhylomeDB" id="Q9RQ16"/>
<dbReference type="BioCyc" id="PAER208964:G1FZ6-409-MONOMER"/>
<dbReference type="EvolutionaryTrace" id="Q9RQ16"/>
<dbReference type="Proteomes" id="UP000002438">
    <property type="component" value="Chromosome"/>
</dbReference>
<dbReference type="GO" id="GO:0005829">
    <property type="term" value="C:cytosol"/>
    <property type="evidence" value="ECO:0000318"/>
    <property type="project" value="GO_Central"/>
</dbReference>
<dbReference type="Gene3D" id="3.40.1740.10">
    <property type="entry name" value="VC0467-like"/>
    <property type="match status" value="1"/>
</dbReference>
<dbReference type="HAMAP" id="MF_00758">
    <property type="entry name" value="UPF0301"/>
    <property type="match status" value="1"/>
</dbReference>
<dbReference type="InterPro" id="IPR003774">
    <property type="entry name" value="AlgH-like"/>
</dbReference>
<dbReference type="NCBIfam" id="NF001266">
    <property type="entry name" value="PRK00228.1-1"/>
    <property type="match status" value="1"/>
</dbReference>
<dbReference type="PANTHER" id="PTHR30327">
    <property type="entry name" value="UNCHARACTERIZED PROTEIN YQGE"/>
    <property type="match status" value="1"/>
</dbReference>
<dbReference type="PANTHER" id="PTHR30327:SF1">
    <property type="entry name" value="UPF0301 PROTEIN YQGE"/>
    <property type="match status" value="1"/>
</dbReference>
<dbReference type="Pfam" id="PF02622">
    <property type="entry name" value="DUF179"/>
    <property type="match status" value="1"/>
</dbReference>
<dbReference type="SUPFAM" id="SSF143456">
    <property type="entry name" value="VC0467-like"/>
    <property type="match status" value="1"/>
</dbReference>